<accession>B2XWJ4</accession>
<protein>
    <recommendedName>
        <fullName>NAD(P)H-quinone oxidoreductase subunit 6, chloroplastic</fullName>
        <ecNumber>7.1.1.-</ecNumber>
    </recommendedName>
    <alternativeName>
        <fullName>NAD(P)H dehydrogenase subunit 6</fullName>
    </alternativeName>
    <alternativeName>
        <fullName>NADH-plastoquinone oxidoreductase subunit 6</fullName>
    </alternativeName>
</protein>
<comment type="function">
    <text evidence="1">NDH shuttles electrons from NAD(P)H:plastoquinone, via FMN and iron-sulfur (Fe-S) centers, to quinones in the photosynthetic chain and possibly in a chloroplast respiratory chain. The immediate electron acceptor for the enzyme in this species is believed to be plastoquinone. Couples the redox reaction to proton translocation, and thus conserves the redox energy in a proton gradient (By similarity).</text>
</comment>
<comment type="catalytic activity">
    <reaction>
        <text>a plastoquinone + NADH + (n+1) H(+)(in) = a plastoquinol + NAD(+) + n H(+)(out)</text>
        <dbReference type="Rhea" id="RHEA:42608"/>
        <dbReference type="Rhea" id="RHEA-COMP:9561"/>
        <dbReference type="Rhea" id="RHEA-COMP:9562"/>
        <dbReference type="ChEBI" id="CHEBI:15378"/>
        <dbReference type="ChEBI" id="CHEBI:17757"/>
        <dbReference type="ChEBI" id="CHEBI:57540"/>
        <dbReference type="ChEBI" id="CHEBI:57945"/>
        <dbReference type="ChEBI" id="CHEBI:62192"/>
    </reaction>
</comment>
<comment type="catalytic activity">
    <reaction>
        <text>a plastoquinone + NADPH + (n+1) H(+)(in) = a plastoquinol + NADP(+) + n H(+)(out)</text>
        <dbReference type="Rhea" id="RHEA:42612"/>
        <dbReference type="Rhea" id="RHEA-COMP:9561"/>
        <dbReference type="Rhea" id="RHEA-COMP:9562"/>
        <dbReference type="ChEBI" id="CHEBI:15378"/>
        <dbReference type="ChEBI" id="CHEBI:17757"/>
        <dbReference type="ChEBI" id="CHEBI:57783"/>
        <dbReference type="ChEBI" id="CHEBI:58349"/>
        <dbReference type="ChEBI" id="CHEBI:62192"/>
    </reaction>
</comment>
<comment type="subunit">
    <text evidence="1">NDH is composed of at least 16 different subunits, 5 of which are encoded in the nucleus.</text>
</comment>
<comment type="subcellular location">
    <subcellularLocation>
        <location evidence="1">Plastid</location>
        <location evidence="1">Chloroplast thylakoid membrane</location>
        <topology evidence="1">Multi-pass membrane protein</topology>
    </subcellularLocation>
</comment>
<comment type="similarity">
    <text evidence="3">Belongs to the complex I subunit 6 family.</text>
</comment>
<proteinExistence type="inferred from homology"/>
<name>NU6C_FAGEA</name>
<organism>
    <name type="scientific">Fagopyrum esculentum subsp. ancestrale</name>
    <name type="common">Wild buckwheat</name>
    <dbReference type="NCBI Taxonomy" id="180217"/>
    <lineage>
        <taxon>Eukaryota</taxon>
        <taxon>Viridiplantae</taxon>
        <taxon>Streptophyta</taxon>
        <taxon>Embryophyta</taxon>
        <taxon>Tracheophyta</taxon>
        <taxon>Spermatophyta</taxon>
        <taxon>Magnoliopsida</taxon>
        <taxon>eudicotyledons</taxon>
        <taxon>Gunneridae</taxon>
        <taxon>Pentapetalae</taxon>
        <taxon>Caryophyllales</taxon>
        <taxon>Polygonaceae</taxon>
        <taxon>Polygonoideae</taxon>
        <taxon>Fagopyreae</taxon>
        <taxon>Fagopyrum</taxon>
    </lineage>
</organism>
<reference key="1">
    <citation type="journal article" date="2008" name="BMC Plant Biol.">
        <title>Comparative chloroplast genomics and phylogenetics of Fagopyrum esculentum ssp. ancestrale - a wild ancestor of cultivated buckwheat.</title>
        <authorList>
            <person name="Logacheva M.D."/>
            <person name="Samigullin T.H."/>
            <person name="Dhingra A."/>
            <person name="Penin A.A."/>
        </authorList>
    </citation>
    <scope>NUCLEOTIDE SEQUENCE [LARGE SCALE GENOMIC DNA]</scope>
</reference>
<gene>
    <name type="primary">ndhG</name>
</gene>
<evidence type="ECO:0000250" key="1"/>
<evidence type="ECO:0000255" key="2"/>
<evidence type="ECO:0000305" key="3"/>
<geneLocation type="chloroplast"/>
<dbReference type="EC" id="7.1.1.-"/>
<dbReference type="EMBL" id="EU254477">
    <property type="protein sequence ID" value="ABY79785.1"/>
    <property type="molecule type" value="Genomic_DNA"/>
</dbReference>
<dbReference type="RefSeq" id="YP_001936570.1">
    <property type="nucleotide sequence ID" value="NC_010776.1"/>
</dbReference>
<dbReference type="SMR" id="B2XWJ4"/>
<dbReference type="GeneID" id="6335948"/>
<dbReference type="GO" id="GO:0009535">
    <property type="term" value="C:chloroplast thylakoid membrane"/>
    <property type="evidence" value="ECO:0007669"/>
    <property type="project" value="UniProtKB-SubCell"/>
</dbReference>
<dbReference type="GO" id="GO:0008137">
    <property type="term" value="F:NADH dehydrogenase (ubiquinone) activity"/>
    <property type="evidence" value="ECO:0007669"/>
    <property type="project" value="InterPro"/>
</dbReference>
<dbReference type="GO" id="GO:0048038">
    <property type="term" value="F:quinone binding"/>
    <property type="evidence" value="ECO:0007669"/>
    <property type="project" value="UniProtKB-KW"/>
</dbReference>
<dbReference type="FunFam" id="1.20.120.1200:FF:000002">
    <property type="entry name" value="NAD(P)H-quinone oxidoreductase subunit 6, chloroplastic"/>
    <property type="match status" value="1"/>
</dbReference>
<dbReference type="Gene3D" id="1.20.120.1200">
    <property type="entry name" value="NADH-ubiquinone/plastoquinone oxidoreductase chain 6, subunit NuoJ"/>
    <property type="match status" value="1"/>
</dbReference>
<dbReference type="InterPro" id="IPR050290">
    <property type="entry name" value="NAD(P)H-Q_Oxidoreduct_6"/>
</dbReference>
<dbReference type="InterPro" id="IPR001457">
    <property type="entry name" value="NADH_UbQ/plastoQ_OxRdtase_su6"/>
</dbReference>
<dbReference type="InterPro" id="IPR042106">
    <property type="entry name" value="Nuo/plastoQ_OxRdtase_6_NuoJ"/>
</dbReference>
<dbReference type="PANTHER" id="PTHR48479">
    <property type="entry name" value="NAD(P)H-QUINONE OXIDOREDUCTASE SUBUNIT 6, CHLOROPLASTIC"/>
    <property type="match status" value="1"/>
</dbReference>
<dbReference type="PANTHER" id="PTHR48479:SF1">
    <property type="entry name" value="NAD(P)H-QUINONE OXIDOREDUCTASE SUBUNIT 6, CHLOROPLASTIC"/>
    <property type="match status" value="1"/>
</dbReference>
<dbReference type="Pfam" id="PF00499">
    <property type="entry name" value="Oxidored_q3"/>
    <property type="match status" value="1"/>
</dbReference>
<feature type="chain" id="PRO_0000360253" description="NAD(P)H-quinone oxidoreductase subunit 6, chloroplastic">
    <location>
        <begin position="1"/>
        <end position="176"/>
    </location>
</feature>
<feature type="transmembrane region" description="Helical" evidence="2">
    <location>
        <begin position="10"/>
        <end position="30"/>
    </location>
</feature>
<feature type="transmembrane region" description="Helical" evidence="2">
    <location>
        <begin position="33"/>
        <end position="53"/>
    </location>
</feature>
<feature type="transmembrane region" description="Helical" evidence="2">
    <location>
        <begin position="61"/>
        <end position="81"/>
    </location>
</feature>
<feature type="transmembrane region" description="Helical" evidence="2">
    <location>
        <begin position="92"/>
        <end position="112"/>
    </location>
</feature>
<feature type="transmembrane region" description="Helical" evidence="2">
    <location>
        <begin position="152"/>
        <end position="172"/>
    </location>
</feature>
<keyword id="KW-0150">Chloroplast</keyword>
<keyword id="KW-0472">Membrane</keyword>
<keyword id="KW-0520">NAD</keyword>
<keyword id="KW-0521">NADP</keyword>
<keyword id="KW-0934">Plastid</keyword>
<keyword id="KW-0618">Plastoquinone</keyword>
<keyword id="KW-0874">Quinone</keyword>
<keyword id="KW-0793">Thylakoid</keyword>
<keyword id="KW-1278">Translocase</keyword>
<keyword id="KW-0812">Transmembrane</keyword>
<keyword id="KW-1133">Transmembrane helix</keyword>
<keyword id="KW-0813">Transport</keyword>
<sequence length="176" mass="19188">MDLPGPIHDFLLVFFGSGLILGGLGVILFTNPIFSAFSLGLVLVCISLFYIIANSQFVASAQLLIYVGAINVLIIFAVMFINGLEYDKNLRLFTLGDGMTLVICTGIFFLLITTILNTSGYGIIWTTKLNQILEQDLINNSQQIGIHLSTDFFPPFELISIILLVALIGAIAVARQ</sequence>